<organism>
    <name type="scientific">Saccharomyces cerevisiae (strain AWRI1631)</name>
    <name type="common">Baker's yeast</name>
    <dbReference type="NCBI Taxonomy" id="545124"/>
    <lineage>
        <taxon>Eukaryota</taxon>
        <taxon>Fungi</taxon>
        <taxon>Dikarya</taxon>
        <taxon>Ascomycota</taxon>
        <taxon>Saccharomycotina</taxon>
        <taxon>Saccharomycetes</taxon>
        <taxon>Saccharomycetales</taxon>
        <taxon>Saccharomycetaceae</taxon>
        <taxon>Saccharomyces</taxon>
    </lineage>
</organism>
<reference key="1">
    <citation type="journal article" date="2008" name="FEMS Yeast Res.">
        <title>Comparative genome analysis of a Saccharomyces cerevisiae wine strain.</title>
        <authorList>
            <person name="Borneman A.R."/>
            <person name="Forgan A.H."/>
            <person name="Pretorius I.S."/>
            <person name="Chambers P.J."/>
        </authorList>
    </citation>
    <scope>NUCLEOTIDE SEQUENCE [LARGE SCALE GENOMIC DNA]</scope>
    <source>
        <strain>AWRI1631</strain>
    </source>
</reference>
<keyword id="KW-0067">ATP-binding</keyword>
<keyword id="KW-0436">Ligase</keyword>
<keyword id="KW-0496">Mitochondrion</keyword>
<keyword id="KW-0547">Nucleotide-binding</keyword>
<keyword id="KW-0648">Protein biosynthesis</keyword>
<accession>B5VDR1</accession>
<feature type="chain" id="PRO_0000413275" description="Glutamyl-tRNA(Gln) amidotransferase subunit B, mitochondrial">
    <location>
        <begin position="1"/>
        <end position="541"/>
    </location>
</feature>
<gene>
    <name evidence="1" type="primary">PET112</name>
    <name type="ORF">AWRI1631_20270</name>
</gene>
<name>GATB_YEAS6</name>
<comment type="function">
    <text evidence="1">Allows the formation of correctly charged Gln-tRNA(Gln) through the transamidation of misacylated Glu-tRNA(Gln) in the mitochondria. The reaction takes place in the presence of glutamine and ATP through an activated gamma-phospho-Glu-tRNA(Gln).</text>
</comment>
<comment type="catalytic activity">
    <reaction evidence="1">
        <text>L-glutamyl-tRNA(Gln) + L-glutamine + ATP + H2O = L-glutaminyl-tRNA(Gln) + L-glutamate + ADP + phosphate + H(+)</text>
        <dbReference type="Rhea" id="RHEA:17521"/>
        <dbReference type="Rhea" id="RHEA-COMP:9681"/>
        <dbReference type="Rhea" id="RHEA-COMP:9684"/>
        <dbReference type="ChEBI" id="CHEBI:15377"/>
        <dbReference type="ChEBI" id="CHEBI:15378"/>
        <dbReference type="ChEBI" id="CHEBI:29985"/>
        <dbReference type="ChEBI" id="CHEBI:30616"/>
        <dbReference type="ChEBI" id="CHEBI:43474"/>
        <dbReference type="ChEBI" id="CHEBI:58359"/>
        <dbReference type="ChEBI" id="CHEBI:78520"/>
        <dbReference type="ChEBI" id="CHEBI:78521"/>
        <dbReference type="ChEBI" id="CHEBI:456216"/>
    </reaction>
</comment>
<comment type="subunit">
    <text evidence="1">Subunit of the heterotrimeric GatFAB amidotransferase (AdT) complex, composed of A, B and F subunits.</text>
</comment>
<comment type="subcellular location">
    <subcellularLocation>
        <location evidence="1">Mitochondrion</location>
    </subcellularLocation>
</comment>
<comment type="miscellaneous">
    <text evidence="1">This protein may be expected to contain an N-terminal transit peptide but none has been predicted.</text>
</comment>
<comment type="similarity">
    <text evidence="1">Belongs to the GatB/GatE family. GatB subfamily.</text>
</comment>
<dbReference type="EC" id="6.3.5.-" evidence="1"/>
<dbReference type="EMBL" id="ABSV01000055">
    <property type="protein sequence ID" value="EDZ73936.1"/>
    <property type="molecule type" value="Genomic_DNA"/>
</dbReference>
<dbReference type="SMR" id="B5VDR1"/>
<dbReference type="Proteomes" id="UP000008988">
    <property type="component" value="Unassembled WGS sequence"/>
</dbReference>
<dbReference type="GO" id="GO:0030956">
    <property type="term" value="C:glutamyl-tRNA(Gln) amidotransferase complex"/>
    <property type="evidence" value="ECO:0007669"/>
    <property type="project" value="UniProtKB-UniRule"/>
</dbReference>
<dbReference type="GO" id="GO:0005739">
    <property type="term" value="C:mitochondrion"/>
    <property type="evidence" value="ECO:0007669"/>
    <property type="project" value="UniProtKB-SubCell"/>
</dbReference>
<dbReference type="GO" id="GO:0005524">
    <property type="term" value="F:ATP binding"/>
    <property type="evidence" value="ECO:0007669"/>
    <property type="project" value="UniProtKB-KW"/>
</dbReference>
<dbReference type="GO" id="GO:0050567">
    <property type="term" value="F:glutaminyl-tRNA synthase (glutamine-hydrolyzing) activity"/>
    <property type="evidence" value="ECO:0007669"/>
    <property type="project" value="UniProtKB-UniRule"/>
</dbReference>
<dbReference type="GO" id="GO:0070681">
    <property type="term" value="P:glutaminyl-tRNAGln biosynthesis via transamidation"/>
    <property type="evidence" value="ECO:0007669"/>
    <property type="project" value="UniProtKB-UniRule"/>
</dbReference>
<dbReference type="GO" id="GO:0032543">
    <property type="term" value="P:mitochondrial translation"/>
    <property type="evidence" value="ECO:0007669"/>
    <property type="project" value="UniProtKB-UniRule"/>
</dbReference>
<dbReference type="FunFam" id="1.10.10.410:FF:000005">
    <property type="entry name" value="Glutamyl-tRNA(Gln) amidotransferase subunit B, mitochondrial"/>
    <property type="match status" value="1"/>
</dbReference>
<dbReference type="Gene3D" id="1.10.10.410">
    <property type="match status" value="1"/>
</dbReference>
<dbReference type="HAMAP" id="MF_00121">
    <property type="entry name" value="GatB"/>
    <property type="match status" value="1"/>
</dbReference>
<dbReference type="InterPro" id="IPR017959">
    <property type="entry name" value="Asn/Gln-tRNA_amidoTrfase_suB/E"/>
</dbReference>
<dbReference type="InterPro" id="IPR006075">
    <property type="entry name" value="Asn/Gln-tRNA_Trfase_suB/E_cat"/>
</dbReference>
<dbReference type="InterPro" id="IPR018027">
    <property type="entry name" value="Asn/Gln_amidotransferase"/>
</dbReference>
<dbReference type="InterPro" id="IPR003789">
    <property type="entry name" value="Asn/Gln_tRNA_amidoTrase-B-like"/>
</dbReference>
<dbReference type="InterPro" id="IPR004413">
    <property type="entry name" value="GatB"/>
</dbReference>
<dbReference type="InterPro" id="IPR023168">
    <property type="entry name" value="GatB_Yqey_C_2"/>
</dbReference>
<dbReference type="InterPro" id="IPR017958">
    <property type="entry name" value="Gln-tRNA_amidoTrfase_suB_CS"/>
</dbReference>
<dbReference type="InterPro" id="IPR014746">
    <property type="entry name" value="Gln_synth/guanido_kin_cat_dom"/>
</dbReference>
<dbReference type="NCBIfam" id="TIGR00133">
    <property type="entry name" value="gatB"/>
    <property type="match status" value="1"/>
</dbReference>
<dbReference type="NCBIfam" id="NF004012">
    <property type="entry name" value="PRK05477.1-2"/>
    <property type="match status" value="1"/>
</dbReference>
<dbReference type="PANTHER" id="PTHR11659">
    <property type="entry name" value="GLUTAMYL-TRNA GLN AMIDOTRANSFERASE SUBUNIT B MITOCHONDRIAL AND PROKARYOTIC PET112-RELATED"/>
    <property type="match status" value="1"/>
</dbReference>
<dbReference type="PANTHER" id="PTHR11659:SF0">
    <property type="entry name" value="GLUTAMYL-TRNA(GLN) AMIDOTRANSFERASE SUBUNIT B, MITOCHONDRIAL"/>
    <property type="match status" value="1"/>
</dbReference>
<dbReference type="Pfam" id="PF02934">
    <property type="entry name" value="GatB_N"/>
    <property type="match status" value="1"/>
</dbReference>
<dbReference type="Pfam" id="PF02637">
    <property type="entry name" value="GatB_Yqey"/>
    <property type="match status" value="1"/>
</dbReference>
<dbReference type="SMART" id="SM00845">
    <property type="entry name" value="GatB_Yqey"/>
    <property type="match status" value="1"/>
</dbReference>
<dbReference type="SUPFAM" id="SSF89095">
    <property type="entry name" value="GatB/YqeY motif"/>
    <property type="match status" value="1"/>
</dbReference>
<dbReference type="SUPFAM" id="SSF55931">
    <property type="entry name" value="Glutamine synthetase/guanido kinase"/>
    <property type="match status" value="1"/>
</dbReference>
<dbReference type="PROSITE" id="PS01234">
    <property type="entry name" value="GATB"/>
    <property type="match status" value="1"/>
</dbReference>
<proteinExistence type="inferred from homology"/>
<protein>
    <recommendedName>
        <fullName evidence="1">Glutamyl-tRNA(Gln) amidotransferase subunit B, mitochondrial</fullName>
        <shortName evidence="1">Glu-AdT subunit B</shortName>
        <ecNumber evidence="1">6.3.5.-</ecNumber>
    </recommendedName>
</protein>
<evidence type="ECO:0000255" key="1">
    <source>
        <dbReference type="HAMAP-Rule" id="MF_03147"/>
    </source>
</evidence>
<sequence length="541" mass="61917">MLQLARFYSLARTKAIHSHGAPFRPEYALKCGLEIHTQLNTKNKLFSQSTNSATSLVDAPNHHTSYYDIALPGTQPVLNLEAILFAMKLSLALGSQVNSISQFDRKHYFYGDQPQGYQLTQHYRPFARGGKINLSKELDDIDESAKEIGILQLQIEQDTGKSHYTETDKDVITLVDLNRSNVPLIELVTKPDFSDIKQVRAFIKKYQNLVRHLHISSGDLETGAMRVDVNLSINEYARVELKNLPNTSSIINAIKYEYQRQVELISVGDTSSLMEPETRGWTGSSTVKLRSKETTIDYRYMPDPELPYINLAQDVISGVRGLMPQLPDDIMRMLMKKPYQLSLKDAKILTYNSNQNDMYNHEALRSYYLDTFREFSKLAGERSNAKLPTNWIIHEFLGDLNKLQIPLARAKEILPPPVFAQFLKLLHEEVISATSGKMLLFHILENFKQSNCQDLSIPDFSKLIEKFELHAINQVDPQELMDLCNDVIAQHTDDTFIRNLVTGKKKSSLKFLIGQGMRRSQGRIKANEFEKKFKEILNIQW</sequence>